<keyword id="KW-0002">3D-structure</keyword>
<keyword id="KW-0963">Cytoplasm</keyword>
<keyword id="KW-0216">Detoxification</keyword>
<keyword id="KW-0903">Direct protein sequencing</keyword>
<keyword id="KW-0521">NADP</keyword>
<keyword id="KW-0547">Nucleotide-binding</keyword>
<keyword id="KW-0560">Oxidoreductase</keyword>
<keyword id="KW-0597">Phosphoprotein</keyword>
<keyword id="KW-1185">Reference proteome</keyword>
<protein>
    <recommendedName>
        <fullName>Aldo-keto reductase family 7 member A3</fullName>
        <ecNumber evidence="2 5">1.1.1.2</ecNumber>
    </recommendedName>
    <alternativeName>
        <fullName evidence="6">Aflatoxin B1 aldehyde reductase member 1</fullName>
        <shortName evidence="6">rAFAR1</shortName>
    </alternativeName>
    <alternativeName>
        <fullName>Aflatoxin B1 aldehyde reductase member 3</fullName>
        <shortName>AFB1-AR</shortName>
    </alternativeName>
</protein>
<evidence type="ECO:0000250" key="1"/>
<evidence type="ECO:0000269" key="2">
    <source>
    </source>
</evidence>
<evidence type="ECO:0000269" key="3">
    <source>
    </source>
</evidence>
<evidence type="ECO:0000269" key="4">
    <source>
    </source>
</evidence>
<evidence type="ECO:0000269" key="5">
    <source>
    </source>
</evidence>
<evidence type="ECO:0000303" key="6">
    <source>
    </source>
</evidence>
<evidence type="ECO:0000303" key="7">
    <source>
    </source>
</evidence>
<evidence type="ECO:0000305" key="8"/>
<evidence type="ECO:0000305" key="9">
    <source>
    </source>
</evidence>
<evidence type="ECO:0000305" key="10">
    <source>
    </source>
</evidence>
<evidence type="ECO:0000305" key="11">
    <source>
    </source>
</evidence>
<evidence type="ECO:0000312" key="12">
    <source>
        <dbReference type="RGD" id="628635"/>
    </source>
</evidence>
<evidence type="ECO:0007744" key="13">
    <source>
        <dbReference type="PDB" id="1GVE"/>
    </source>
</evidence>
<evidence type="ECO:0007744" key="14">
    <source>
    </source>
</evidence>
<evidence type="ECO:0007829" key="15">
    <source>
        <dbReference type="PDB" id="1GVE"/>
    </source>
</evidence>
<accession>P38918</accession>
<accession>Q5EBB7</accession>
<accession>Q68FZ3</accession>
<accession>Q9QX16</accession>
<comment type="function">
    <text evidence="2 5">Catalyzes the NADPH-dependent reduction of various carbonyl-containing compounds, including aldehydes, ketones, and toxic products from cellular metabolism or environmental exposure. Can reduce the dialdehyde form of aflatoxin B1 (AFB1) into alcohol derivatives, via monoaldehydes intermediates, thus preventing the formation of protein adducts that contribute to AFB1-induced toxicity.</text>
</comment>
<comment type="catalytic activity">
    <reaction evidence="2 5">
        <text>a primary alcohol + NADP(+) = an aldehyde + NADPH + H(+)</text>
        <dbReference type="Rhea" id="RHEA:15937"/>
        <dbReference type="ChEBI" id="CHEBI:15378"/>
        <dbReference type="ChEBI" id="CHEBI:15734"/>
        <dbReference type="ChEBI" id="CHEBI:17478"/>
        <dbReference type="ChEBI" id="CHEBI:57783"/>
        <dbReference type="ChEBI" id="CHEBI:58349"/>
        <dbReference type="EC" id="1.1.1.2"/>
    </reaction>
    <physiologicalReaction direction="right-to-left" evidence="9">
        <dbReference type="Rhea" id="RHEA:15939"/>
    </physiologicalReaction>
</comment>
<comment type="catalytic activity">
    <reaction evidence="3">
        <text>aflatoxin B1 dialdehyde + NADPH + H(+) = aflatoxin B1 C(6a)-monoaldehyde + NADP(+)</text>
        <dbReference type="Rhea" id="RHEA:84055"/>
        <dbReference type="ChEBI" id="CHEBI:15378"/>
        <dbReference type="ChEBI" id="CHEBI:57783"/>
        <dbReference type="ChEBI" id="CHEBI:58349"/>
        <dbReference type="ChEBI" id="CHEBI:133967"/>
        <dbReference type="ChEBI" id="CHEBI:233587"/>
    </reaction>
    <physiologicalReaction direction="left-to-right" evidence="10">
        <dbReference type="Rhea" id="RHEA:84056"/>
    </physiologicalReaction>
</comment>
<comment type="catalytic activity">
    <reaction evidence="3">
        <text>aflatoxin B1 dialdehyde + NADPH + H(+) = aflatoxin B1 C(8)-monoaldehyde + NADP(+)</text>
        <dbReference type="Rhea" id="RHEA:84059"/>
        <dbReference type="ChEBI" id="CHEBI:15378"/>
        <dbReference type="ChEBI" id="CHEBI:57783"/>
        <dbReference type="ChEBI" id="CHEBI:58349"/>
        <dbReference type="ChEBI" id="CHEBI:133967"/>
        <dbReference type="ChEBI" id="CHEBI:233588"/>
    </reaction>
    <physiologicalReaction direction="left-to-right" evidence="10">
        <dbReference type="Rhea" id="RHEA:84060"/>
    </physiologicalReaction>
</comment>
<comment type="catalytic activity">
    <reaction evidence="3">
        <text>aflatoxin B1 C(6a)-monoaldehyde + NADPH + 2 H(+) = aflatoxin B1 triol + NADP(+)</text>
        <dbReference type="Rhea" id="RHEA:84063"/>
        <dbReference type="ChEBI" id="CHEBI:15378"/>
        <dbReference type="ChEBI" id="CHEBI:53108"/>
        <dbReference type="ChEBI" id="CHEBI:57783"/>
        <dbReference type="ChEBI" id="CHEBI:58349"/>
        <dbReference type="ChEBI" id="CHEBI:233587"/>
    </reaction>
    <physiologicalReaction direction="left-to-right" evidence="10">
        <dbReference type="Rhea" id="RHEA:84064"/>
    </physiologicalReaction>
</comment>
<comment type="activity regulation">
    <text evidence="4">Inhibited by citrate.</text>
</comment>
<comment type="biophysicochemical properties">
    <kinetics>
        <KM evidence="2">21.3 uM for aflatoxin B1-dihydrodiol</KM>
        <KM evidence="2">118.3 uM for 4-nitrobenzaldehyde</KM>
        <KM evidence="5">0.7 uM for 2-carboxybenzaldehyde</KM>
        <KM evidence="5">163 uM for succinic semialdehyde</KM>
        <KM evidence="5">1.66 uM for NADPH</KM>
        <KM evidence="2">4 uM for 9,10-phenanthrenequinone</KM>
        <Vmax evidence="2">2.7 umol/min/mg enzyme with 4-nitrobenzaldehyde as substrate</Vmax>
        <Vmax evidence="2">4.56 umol/min/mg enzyme with 9,10-phenanthrenequinone as substrate</Vmax>
        <Vmax evidence="2">0.34 umol/min/mg enzyme with aflatoxin B1 dihydrodiol as substrate (pH 6.6)</Vmax>
    </kinetics>
</comment>
<comment type="subunit">
    <text evidence="4 5">Homodimer (PubMed:11839745). Heterodimer with AKR7A2.</text>
</comment>
<comment type="subcellular location">
    <subcellularLocation>
        <location evidence="2">Cytoplasm</location>
    </subcellularLocation>
</comment>
<comment type="induction">
    <text>By the phenolic antioxidant ethoxyquin.</text>
</comment>
<comment type="similarity">
    <text evidence="8">Belongs to the aldo/keto reductase family. Aldo/keto reductase 2 subfamily.</text>
</comment>
<reference key="1">
    <citation type="journal article" date="1993" name="Proc. Natl. Acad. Sci. U.S.A.">
        <title>An ethoxyquin-inducible aldehyde reductase from rat liver that metabolizes aflatoxin B1 defines a subfamily of aldo-keto reductases.</title>
        <authorList>
            <person name="Ellis E.M."/>
            <person name="Judah D.J."/>
            <person name="Neal G.E."/>
            <person name="Hayes J.D."/>
        </authorList>
    </citation>
    <scope>NUCLEOTIDE SEQUENCE [MRNA]</scope>
    <source>
        <strain>Fischer 344</strain>
        <tissue>Liver</tissue>
    </source>
</reference>
<reference key="2">
    <citation type="journal article" date="1999" name="Carcinogenesis">
        <title>cDNA cloning, expression and activity of a second human aflatoxin B1-metabolizing member of the aldo-keto reductase superfamily, AKR7A3.</title>
        <authorList>
            <person name="Knight L.P."/>
            <person name="Primiano T."/>
            <person name="Groopman J.D."/>
            <person name="Kensler T.W."/>
            <person name="Sutter T.R."/>
        </authorList>
    </citation>
    <scope>NUCLEOTIDE SEQUENCE [MRNA]</scope>
    <scope>FUNCTION</scope>
    <scope>CATALYTIC ACTIVITY</scope>
    <scope>BIOPHYSICOCHEMICAL PROPERTIES</scope>
    <source>
        <strain>Fischer 344</strain>
        <tissue>Liver</tissue>
    </source>
</reference>
<reference key="3">
    <citation type="journal article" date="2003" name="Carcinogenesis">
        <title>Characterization of the rat aflatoxin B1 aldehyde reductase gene, AKR7A1. Structure and chromosomal localization of AKR7A1 as well as identification of antioxidant response elements in the gene promoter.</title>
        <authorList>
            <person name="Ellis E.M."/>
            <person name="Slattery C.M."/>
            <person name="Hayes J.D."/>
        </authorList>
    </citation>
    <scope>NUCLEOTIDE SEQUENCE [GENOMIC DNA]</scope>
    <source>
        <strain>Fischer 344</strain>
    </source>
</reference>
<reference key="4">
    <citation type="journal article" date="2004" name="Genome Res.">
        <title>The status, quality, and expansion of the NIH full-length cDNA project: the Mammalian Gene Collection (MGC).</title>
        <authorList>
            <consortium name="The MGC Project Team"/>
        </authorList>
    </citation>
    <scope>NUCLEOTIDE SEQUENCE [LARGE SCALE MRNA]</scope>
    <source>
        <tissue>Kidney</tissue>
    </source>
</reference>
<reference key="5">
    <citation type="submission" date="1994-11" db="UniProtKB">
        <authorList>
            <person name="Raymackers J."/>
            <person name="Anderson L."/>
        </authorList>
    </citation>
    <scope>PROTEIN SEQUENCE OF 6-17; 89-97; 156-184; 232-246 AND 250-274</scope>
    <source>
        <tissue>Liver</tissue>
    </source>
</reference>
<reference key="6">
    <citation type="journal article" date="1993" name="Cancer Res.">
        <title>Resistance to aflatoxin B1 is associated with the expression of a novel aldo-keto reductase which has catalytic activity towards a cytotoxic aldehyde-containing metabolite of the toxin.</title>
        <authorList>
            <person name="Hayes J.D."/>
            <person name="Judah D.J."/>
            <person name="Neal G.E."/>
        </authorList>
    </citation>
    <scope>PARTIAL PROTEIN SEQUENCE</scope>
</reference>
<reference key="7">
    <citation type="journal article" date="2001" name="Chem. Res. Toxicol.">
        <title>Reduction of aflatoxin B1 dialdehyde by rat and human aldo-keto reductases.</title>
        <authorList>
            <person name="Guengerich F.P."/>
            <person name="Cai H."/>
            <person name="McMahon M."/>
            <person name="Hayes J.D."/>
            <person name="Sutter T.R."/>
            <person name="Groopman J.D."/>
            <person name="Deng Z."/>
            <person name="Harris T.M."/>
        </authorList>
    </citation>
    <scope>FUNCTION</scope>
    <scope>CATALYTIC ACTIVITY</scope>
</reference>
<reference key="8">
    <citation type="journal article" date="2002" name="Biochem. J.">
        <title>Novel homodimeric and heterodimeric rat gamma-hydroxybutyrate synthases that associate with the Golgi apparatus define a distinct subclass of aldo-keto reductase 7 family proteins.</title>
        <authorList>
            <person name="Kelly V.P."/>
            <person name="Sherratt P.J."/>
            <person name="Crouch D.H."/>
            <person name="Hayes J.D."/>
        </authorList>
    </citation>
    <scope>FUNCTION</scope>
    <scope>CATALYTIC ACTIVITY</scope>
    <scope>SUBUNIT</scope>
    <scope>BIOPHYSICOCHEMICAL PROPERTIES</scope>
</reference>
<reference key="9">
    <citation type="journal article" date="2012" name="Nat. Commun.">
        <title>Quantitative maps of protein phosphorylation sites across 14 different rat organs and tissues.</title>
        <authorList>
            <person name="Lundby A."/>
            <person name="Secher A."/>
            <person name="Lage K."/>
            <person name="Nordsborg N.B."/>
            <person name="Dmytriyev A."/>
            <person name="Lundby C."/>
            <person name="Olsen J.V."/>
        </authorList>
    </citation>
    <scope>PHOSPHORYLATION [LARGE SCALE ANALYSIS] AT SER-2</scope>
    <scope>IDENTIFICATION BY MASS SPECTROMETRY [LARGE SCALE ANALYSIS]</scope>
</reference>
<reference evidence="13" key="10">
    <citation type="journal article" date="2002" name="J. Biol. Chem.">
        <title>The crystal structure of rat liver AKR7A1. A dimeric member of the aldo-keto reductase superfamily.</title>
        <authorList>
            <person name="Kozma E."/>
            <person name="Brown E."/>
            <person name="Ellis E.M."/>
            <person name="Lapthorn A.J."/>
        </authorList>
    </citation>
    <scope>X-RAY CRYSTALLOGRAPHY (1.38 ANGSTROMS) IN COMPLEX WITH NADP(+) AND THE INHIBITOR CITRATE</scope>
    <scope>SUBUNIT</scope>
    <scope>ACTIVITY REGULATION</scope>
</reference>
<name>ARK73_RAT</name>
<sequence>MSQARPATVLGAMEMGRRMDVTSSSASVRAFLQRGHTEIDTAFVYANGQSETILGDLGLGLGRSGCKVKIATKAAPMFGKTLKPADVRFQLETSLKRLQCPRVDLFYLHFPDHGTPIEETLQACHQLHQEGKFVELGLSNYVSWEVAEICTLCKKNGWIMPTVYQGMYNAITRQVETELFPCLRHFGLRFYAFNPLAGGLLTGRYKYQDKDGKNPESRFFGNPFSQLYMDRYWKEEHFNGIALVEKALKTTYGPTAPSMISAAVRWMYHHSQLKGTQGDAVILGMSSLEQLEQNLALVEEGPLEPAVVDAFDQAWNLVAHECPNYFR</sequence>
<organism>
    <name type="scientific">Rattus norvegicus</name>
    <name type="common">Rat</name>
    <dbReference type="NCBI Taxonomy" id="10116"/>
    <lineage>
        <taxon>Eukaryota</taxon>
        <taxon>Metazoa</taxon>
        <taxon>Chordata</taxon>
        <taxon>Craniata</taxon>
        <taxon>Vertebrata</taxon>
        <taxon>Euteleostomi</taxon>
        <taxon>Mammalia</taxon>
        <taxon>Eutheria</taxon>
        <taxon>Euarchontoglires</taxon>
        <taxon>Glires</taxon>
        <taxon>Rodentia</taxon>
        <taxon>Myomorpha</taxon>
        <taxon>Muroidea</taxon>
        <taxon>Muridae</taxon>
        <taxon>Murinae</taxon>
        <taxon>Rattus</taxon>
    </lineage>
</organism>
<proteinExistence type="evidence at protein level"/>
<dbReference type="EC" id="1.1.1.2" evidence="2 5"/>
<dbReference type="EMBL" id="X74673">
    <property type="protein sequence ID" value="CAA52740.1"/>
    <property type="molecule type" value="mRNA"/>
</dbReference>
<dbReference type="EMBL" id="AF045464">
    <property type="protein sequence ID" value="AAD02413.1"/>
    <property type="molecule type" value="mRNA"/>
</dbReference>
<dbReference type="EMBL" id="AY230497">
    <property type="protein sequence ID" value="AAO48423.1"/>
    <property type="molecule type" value="Genomic_DNA"/>
</dbReference>
<dbReference type="EMBL" id="AY230491">
    <property type="protein sequence ID" value="AAO48423.1"/>
    <property type="status" value="JOINED"/>
    <property type="molecule type" value="Genomic_DNA"/>
</dbReference>
<dbReference type="EMBL" id="AY230492">
    <property type="protein sequence ID" value="AAO48423.1"/>
    <property type="status" value="JOINED"/>
    <property type="molecule type" value="Genomic_DNA"/>
</dbReference>
<dbReference type="EMBL" id="AY230493">
    <property type="protein sequence ID" value="AAO48423.1"/>
    <property type="status" value="JOINED"/>
    <property type="molecule type" value="Genomic_DNA"/>
</dbReference>
<dbReference type="EMBL" id="AY230494">
    <property type="protein sequence ID" value="AAO48423.1"/>
    <property type="status" value="JOINED"/>
    <property type="molecule type" value="Genomic_DNA"/>
</dbReference>
<dbReference type="EMBL" id="AY230495">
    <property type="protein sequence ID" value="AAO48423.1"/>
    <property type="status" value="JOINED"/>
    <property type="molecule type" value="Genomic_DNA"/>
</dbReference>
<dbReference type="EMBL" id="AY230496">
    <property type="protein sequence ID" value="AAO48423.1"/>
    <property type="status" value="JOINED"/>
    <property type="molecule type" value="Genomic_DNA"/>
</dbReference>
<dbReference type="EMBL" id="BC078872">
    <property type="protein sequence ID" value="AAH78872.2"/>
    <property type="molecule type" value="mRNA"/>
</dbReference>
<dbReference type="EMBL" id="BC089811">
    <property type="protein sequence ID" value="AAH89811.1"/>
    <property type="molecule type" value="mRNA"/>
</dbReference>
<dbReference type="PIR" id="A48804">
    <property type="entry name" value="A48804"/>
</dbReference>
<dbReference type="RefSeq" id="NP_037347.1">
    <property type="nucleotide sequence ID" value="NM_013215.2"/>
</dbReference>
<dbReference type="PDB" id="1GVE">
    <property type="method" value="X-ray"/>
    <property type="resolution" value="1.38 A"/>
    <property type="chains" value="A/B=1-327"/>
</dbReference>
<dbReference type="PDBsum" id="1GVE"/>
<dbReference type="SMR" id="P38918"/>
<dbReference type="FunCoup" id="P38918">
    <property type="interactions" value="76"/>
</dbReference>
<dbReference type="STRING" id="10116.ENSRNOP00000024160"/>
<dbReference type="ChEMBL" id="CHEMBL2697"/>
<dbReference type="GlyGen" id="P38918">
    <property type="glycosylation" value="1 site"/>
</dbReference>
<dbReference type="iPTMnet" id="P38918"/>
<dbReference type="PhosphoSitePlus" id="P38918"/>
<dbReference type="PaxDb" id="10116-ENSRNOP00000024160"/>
<dbReference type="GeneID" id="26760"/>
<dbReference type="KEGG" id="rno:26760"/>
<dbReference type="UCSC" id="RGD:628635">
    <property type="organism name" value="rat"/>
</dbReference>
<dbReference type="AGR" id="RGD:628635"/>
<dbReference type="CTD" id="22977"/>
<dbReference type="RGD" id="628635">
    <property type="gene designation" value="Akr7a3"/>
</dbReference>
<dbReference type="VEuPathDB" id="HostDB:ENSRNOG00000017899"/>
<dbReference type="eggNOG" id="ENOG502QU2T">
    <property type="taxonomic scope" value="Eukaryota"/>
</dbReference>
<dbReference type="HOGENOM" id="CLU_023205_1_1_1"/>
<dbReference type="InParanoid" id="P38918"/>
<dbReference type="PhylomeDB" id="P38918"/>
<dbReference type="TreeFam" id="TF329173"/>
<dbReference type="Reactome" id="R-RNO-5423646">
    <property type="pathway name" value="Aflatoxin activation and detoxification"/>
</dbReference>
<dbReference type="SABIO-RK" id="P38918"/>
<dbReference type="EvolutionaryTrace" id="P38918"/>
<dbReference type="PRO" id="PR:P38918"/>
<dbReference type="Proteomes" id="UP000002494">
    <property type="component" value="Chromosome 5"/>
</dbReference>
<dbReference type="Bgee" id="ENSRNOG00000017899">
    <property type="expression patterns" value="Expressed in adult mammalian kidney and 18 other cell types or tissues"/>
</dbReference>
<dbReference type="GO" id="GO:0005737">
    <property type="term" value="C:cytoplasm"/>
    <property type="evidence" value="ECO:0000314"/>
    <property type="project" value="UniProtKB"/>
</dbReference>
<dbReference type="GO" id="GO:0004033">
    <property type="term" value="F:aldo-keto reductase (NADPH) activity"/>
    <property type="evidence" value="ECO:0000314"/>
    <property type="project" value="UniProtKB"/>
</dbReference>
<dbReference type="GO" id="GO:0042802">
    <property type="term" value="F:identical protein binding"/>
    <property type="evidence" value="ECO:0000266"/>
    <property type="project" value="RGD"/>
</dbReference>
<dbReference type="GO" id="GO:0070401">
    <property type="term" value="F:NADP+ binding"/>
    <property type="evidence" value="ECO:0000314"/>
    <property type="project" value="UniProtKB"/>
</dbReference>
<dbReference type="GO" id="GO:0046223">
    <property type="term" value="P:aflatoxin catabolic process"/>
    <property type="evidence" value="ECO:0000314"/>
    <property type="project" value="UniProtKB"/>
</dbReference>
<dbReference type="GO" id="GO:0046222">
    <property type="term" value="P:aflatoxin metabolic process"/>
    <property type="evidence" value="ECO:0000314"/>
    <property type="project" value="RGD"/>
</dbReference>
<dbReference type="CDD" id="cd19075">
    <property type="entry name" value="AKR_AKR7A1-5"/>
    <property type="match status" value="1"/>
</dbReference>
<dbReference type="FunFam" id="3.20.20.100:FF:000017">
    <property type="entry name" value="Aflatoxin B1 aldehyde reductase member 2"/>
    <property type="match status" value="1"/>
</dbReference>
<dbReference type="Gene3D" id="3.20.20.100">
    <property type="entry name" value="NADP-dependent oxidoreductase domain"/>
    <property type="match status" value="1"/>
</dbReference>
<dbReference type="InterPro" id="IPR020471">
    <property type="entry name" value="AKR"/>
</dbReference>
<dbReference type="InterPro" id="IPR050523">
    <property type="entry name" value="AKR_Detox_Biosynth"/>
</dbReference>
<dbReference type="InterPro" id="IPR023210">
    <property type="entry name" value="NADP_OxRdtase_dom"/>
</dbReference>
<dbReference type="InterPro" id="IPR036812">
    <property type="entry name" value="NADP_OxRdtase_dom_sf"/>
</dbReference>
<dbReference type="PANTHER" id="PTHR43364:SF4">
    <property type="entry name" value="NAD(P)-LINKED OXIDOREDUCTASE SUPERFAMILY PROTEIN"/>
    <property type="match status" value="1"/>
</dbReference>
<dbReference type="PANTHER" id="PTHR43364">
    <property type="entry name" value="NADH-SPECIFIC METHYLGLYOXAL REDUCTASE-RELATED"/>
    <property type="match status" value="1"/>
</dbReference>
<dbReference type="Pfam" id="PF00248">
    <property type="entry name" value="Aldo_ket_red"/>
    <property type="match status" value="1"/>
</dbReference>
<dbReference type="PRINTS" id="PR00069">
    <property type="entry name" value="ALDKETRDTASE"/>
</dbReference>
<dbReference type="SUPFAM" id="SSF51430">
    <property type="entry name" value="NAD(P)-linked oxidoreductase"/>
    <property type="match status" value="1"/>
</dbReference>
<feature type="chain" id="PRO_0000070374" description="Aldo-keto reductase family 7 member A3">
    <location>
        <begin position="1"/>
        <end position="327"/>
    </location>
</feature>
<feature type="active site" description="Proton donor">
    <location>
        <position position="45"/>
    </location>
</feature>
<feature type="binding site" evidence="4 13">
    <location>
        <position position="13"/>
    </location>
    <ligand>
        <name>NADP(+)</name>
        <dbReference type="ChEBI" id="CHEBI:58349"/>
    </ligand>
</feature>
<feature type="binding site" evidence="4 13">
    <location>
        <position position="18"/>
    </location>
    <ligand>
        <name>NADP(+)</name>
        <dbReference type="ChEBI" id="CHEBI:58349"/>
    </ligand>
</feature>
<feature type="binding site" evidence="4 13">
    <location>
        <position position="40"/>
    </location>
    <ligand>
        <name>NADP(+)</name>
        <dbReference type="ChEBI" id="CHEBI:58349"/>
    </ligand>
</feature>
<feature type="binding site" evidence="11">
    <location>
        <position position="109"/>
    </location>
    <ligand>
        <name>citrate</name>
        <dbReference type="ChEBI" id="CHEBI:16947"/>
    </ligand>
</feature>
<feature type="binding site" evidence="4 13">
    <location>
        <position position="140"/>
    </location>
    <ligand>
        <name>NADP(+)</name>
        <dbReference type="ChEBI" id="CHEBI:58349"/>
    </ligand>
</feature>
<feature type="binding site" evidence="4 13">
    <location>
        <position position="194"/>
    </location>
    <ligand>
        <name>NADP(+)</name>
        <dbReference type="ChEBI" id="CHEBI:58349"/>
    </ligand>
</feature>
<feature type="binding site" evidence="4 13">
    <location>
        <position position="196"/>
    </location>
    <ligand>
        <name>NADP(+)</name>
        <dbReference type="ChEBI" id="CHEBI:58349"/>
    </ligand>
</feature>
<feature type="binding site" evidence="4 13">
    <location>
        <position position="198"/>
    </location>
    <ligand>
        <name>NADP(+)</name>
        <dbReference type="ChEBI" id="CHEBI:58349"/>
    </ligand>
</feature>
<feature type="binding site" evidence="4 13">
    <location>
        <position position="204"/>
    </location>
    <ligand>
        <name>NADP(+)</name>
        <dbReference type="ChEBI" id="CHEBI:58349"/>
    </ligand>
</feature>
<feature type="binding site" evidence="4 13">
    <location>
        <position position="218"/>
    </location>
    <ligand>
        <name>NADP(+)</name>
        <dbReference type="ChEBI" id="CHEBI:58349"/>
    </ligand>
</feature>
<feature type="binding site" evidence="11">
    <location>
        <position position="228"/>
    </location>
    <ligand>
        <name>citrate</name>
        <dbReference type="ChEBI" id="CHEBI:16947"/>
    </ligand>
</feature>
<feature type="binding site" evidence="11">
    <location>
        <position position="231"/>
    </location>
    <ligand>
        <name>citrate</name>
        <dbReference type="ChEBI" id="CHEBI:16947"/>
    </ligand>
</feature>
<feature type="binding site" evidence="4 13">
    <location>
        <position position="286"/>
    </location>
    <ligand>
        <name>NADP(+)</name>
        <dbReference type="ChEBI" id="CHEBI:58349"/>
    </ligand>
</feature>
<feature type="binding site" evidence="4 13">
    <location>
        <position position="290"/>
    </location>
    <ligand>
        <name>NADP(+)</name>
        <dbReference type="ChEBI" id="CHEBI:58349"/>
    </ligand>
</feature>
<feature type="binding site" evidence="4 13">
    <location>
        <position position="293"/>
    </location>
    <ligand>
        <name>NADP(+)</name>
        <dbReference type="ChEBI" id="CHEBI:58349"/>
    </ligand>
</feature>
<feature type="binding site" evidence="4 13">
    <location>
        <position position="294"/>
    </location>
    <ligand>
        <name>NADP(+)</name>
        <dbReference type="ChEBI" id="CHEBI:58349"/>
    </ligand>
</feature>
<feature type="binding site" evidence="4 13">
    <location>
        <position position="327"/>
    </location>
    <ligand>
        <name>NADP(+)</name>
        <dbReference type="ChEBI" id="CHEBI:58349"/>
    </ligand>
</feature>
<feature type="site" description="Lowers pKa of active site Tyr" evidence="1">
    <location>
        <position position="73"/>
    </location>
</feature>
<feature type="modified residue" description="Phosphoserine" evidence="14">
    <location>
        <position position="2"/>
    </location>
</feature>
<feature type="sequence conflict" description="In Ref. 1; CAA52740." evidence="8" ref="1">
    <original>QL</original>
    <variation>HV</variation>
    <location>
        <begin position="126"/>
        <end position="127"/>
    </location>
</feature>
<feature type="strand" evidence="15">
    <location>
        <begin position="7"/>
        <end position="11"/>
    </location>
</feature>
<feature type="turn" evidence="15">
    <location>
        <begin position="16"/>
        <end position="18"/>
    </location>
</feature>
<feature type="helix" evidence="15">
    <location>
        <begin position="21"/>
        <end position="33"/>
    </location>
</feature>
<feature type="strand" evidence="15">
    <location>
        <begin position="38"/>
        <end position="40"/>
    </location>
</feature>
<feature type="helix" evidence="15">
    <location>
        <begin position="45"/>
        <end position="48"/>
    </location>
</feature>
<feature type="helix" evidence="15">
    <location>
        <begin position="49"/>
        <end position="54"/>
    </location>
</feature>
<feature type="strand" evidence="15">
    <location>
        <begin position="68"/>
        <end position="74"/>
    </location>
</feature>
<feature type="helix" evidence="15">
    <location>
        <begin position="84"/>
        <end position="97"/>
    </location>
</feature>
<feature type="strand" evidence="15">
    <location>
        <begin position="103"/>
        <end position="108"/>
    </location>
</feature>
<feature type="helix" evidence="15">
    <location>
        <begin position="117"/>
        <end position="129"/>
    </location>
</feature>
<feature type="strand" evidence="15">
    <location>
        <begin position="132"/>
        <end position="140"/>
    </location>
</feature>
<feature type="helix" evidence="15">
    <location>
        <begin position="143"/>
        <end position="156"/>
    </location>
</feature>
<feature type="strand" evidence="15">
    <location>
        <begin position="161"/>
        <end position="167"/>
    </location>
</feature>
<feature type="helix" evidence="15">
    <location>
        <begin position="174"/>
        <end position="176"/>
    </location>
</feature>
<feature type="helix" evidence="15">
    <location>
        <begin position="179"/>
        <end position="186"/>
    </location>
</feature>
<feature type="strand" evidence="15">
    <location>
        <begin position="189"/>
        <end position="193"/>
    </location>
</feature>
<feature type="helix" evidence="15">
    <location>
        <begin position="197"/>
        <end position="202"/>
    </location>
</feature>
<feature type="helix" evidence="15">
    <location>
        <begin position="207"/>
        <end position="211"/>
    </location>
</feature>
<feature type="strand" evidence="15">
    <location>
        <begin position="216"/>
        <end position="221"/>
    </location>
</feature>
<feature type="helix" evidence="15">
    <location>
        <begin position="225"/>
        <end position="232"/>
    </location>
</feature>
<feature type="helix" evidence="15">
    <location>
        <begin position="235"/>
        <end position="252"/>
    </location>
</feature>
<feature type="helix" evidence="15">
    <location>
        <begin position="259"/>
        <end position="269"/>
    </location>
</feature>
<feature type="helix" evidence="15">
    <location>
        <begin position="275"/>
        <end position="277"/>
    </location>
</feature>
<feature type="strand" evidence="15">
    <location>
        <begin position="280"/>
        <end position="283"/>
    </location>
</feature>
<feature type="helix" evidence="15">
    <location>
        <begin position="288"/>
        <end position="297"/>
    </location>
</feature>
<feature type="helix" evidence="15">
    <location>
        <begin position="305"/>
        <end position="318"/>
    </location>
</feature>
<feature type="helix" evidence="15">
    <location>
        <begin position="319"/>
        <end position="321"/>
    </location>
</feature>
<gene>
    <name evidence="12" type="primary">Akr7a3</name>
    <name type="synonym">Afar</name>
    <name evidence="7" type="synonym">Akr7a1</name>
</gene>